<organism>
    <name type="scientific">Thermomicrobium roseum (strain ATCC 27502 / DSM 5159 / P-2)</name>
    <dbReference type="NCBI Taxonomy" id="309801"/>
    <lineage>
        <taxon>Bacteria</taxon>
        <taxon>Pseudomonadati</taxon>
        <taxon>Thermomicrobiota</taxon>
        <taxon>Thermomicrobia</taxon>
        <taxon>Thermomicrobiales</taxon>
        <taxon>Thermomicrobiaceae</taxon>
        <taxon>Thermomicrobium</taxon>
    </lineage>
</organism>
<keyword id="KW-0520">NAD</keyword>
<keyword id="KW-0560">Oxidoreductase</keyword>
<keyword id="KW-1185">Reference proteome</keyword>
<keyword id="KW-0816">Tricarboxylic acid cycle</keyword>
<feature type="chain" id="PRO_1000206447" description="Malate dehydrogenase">
    <location>
        <begin position="1"/>
        <end position="309"/>
    </location>
</feature>
<feature type="active site" description="Proton acceptor" evidence="1">
    <location>
        <position position="175"/>
    </location>
</feature>
<feature type="binding site" evidence="1">
    <location>
        <begin position="9"/>
        <end position="14"/>
    </location>
    <ligand>
        <name>NAD(+)</name>
        <dbReference type="ChEBI" id="CHEBI:57540"/>
    </ligand>
</feature>
<feature type="binding site" evidence="1">
    <location>
        <position position="33"/>
    </location>
    <ligand>
        <name>NAD(+)</name>
        <dbReference type="ChEBI" id="CHEBI:57540"/>
    </ligand>
</feature>
<feature type="binding site" evidence="1">
    <location>
        <position position="82"/>
    </location>
    <ligand>
        <name>substrate</name>
    </ligand>
</feature>
<feature type="binding site" evidence="1">
    <location>
        <position position="88"/>
    </location>
    <ligand>
        <name>substrate</name>
    </ligand>
</feature>
<feature type="binding site" evidence="1">
    <location>
        <position position="95"/>
    </location>
    <ligand>
        <name>NAD(+)</name>
        <dbReference type="ChEBI" id="CHEBI:57540"/>
    </ligand>
</feature>
<feature type="binding site" evidence="1">
    <location>
        <begin position="118"/>
        <end position="120"/>
    </location>
    <ligand>
        <name>NAD(+)</name>
        <dbReference type="ChEBI" id="CHEBI:57540"/>
    </ligand>
</feature>
<feature type="binding site" evidence="1">
    <location>
        <position position="120"/>
    </location>
    <ligand>
        <name>substrate</name>
    </ligand>
</feature>
<feature type="binding site" evidence="1">
    <location>
        <position position="151"/>
    </location>
    <ligand>
        <name>substrate</name>
    </ligand>
</feature>
<dbReference type="EC" id="1.1.1.37" evidence="1"/>
<dbReference type="EMBL" id="CP001275">
    <property type="protein sequence ID" value="ACM05183.1"/>
    <property type="molecule type" value="Genomic_DNA"/>
</dbReference>
<dbReference type="RefSeq" id="WP_012642298.1">
    <property type="nucleotide sequence ID" value="NC_011959.1"/>
</dbReference>
<dbReference type="SMR" id="B9KZS7"/>
<dbReference type="STRING" id="309801.trd_0921"/>
<dbReference type="KEGG" id="tro:trd_0921"/>
<dbReference type="eggNOG" id="COG0039">
    <property type="taxonomic scope" value="Bacteria"/>
</dbReference>
<dbReference type="HOGENOM" id="CLU_045401_2_1_0"/>
<dbReference type="OrthoDB" id="9802969at2"/>
<dbReference type="Proteomes" id="UP000000447">
    <property type="component" value="Chromosome"/>
</dbReference>
<dbReference type="GO" id="GO:0004459">
    <property type="term" value="F:L-lactate dehydrogenase activity"/>
    <property type="evidence" value="ECO:0007669"/>
    <property type="project" value="TreeGrafter"/>
</dbReference>
<dbReference type="GO" id="GO:0030060">
    <property type="term" value="F:L-malate dehydrogenase (NAD+) activity"/>
    <property type="evidence" value="ECO:0007669"/>
    <property type="project" value="UniProtKB-UniRule"/>
</dbReference>
<dbReference type="GO" id="GO:0006089">
    <property type="term" value="P:lactate metabolic process"/>
    <property type="evidence" value="ECO:0007669"/>
    <property type="project" value="TreeGrafter"/>
</dbReference>
<dbReference type="GO" id="GO:0006099">
    <property type="term" value="P:tricarboxylic acid cycle"/>
    <property type="evidence" value="ECO:0007669"/>
    <property type="project" value="UniProtKB-UniRule"/>
</dbReference>
<dbReference type="CDD" id="cd01339">
    <property type="entry name" value="LDH-like_MDH"/>
    <property type="match status" value="1"/>
</dbReference>
<dbReference type="FunFam" id="3.40.50.720:FF:000018">
    <property type="entry name" value="Malate dehydrogenase"/>
    <property type="match status" value="1"/>
</dbReference>
<dbReference type="FunFam" id="3.90.110.10:FF:000004">
    <property type="entry name" value="Malate dehydrogenase"/>
    <property type="match status" value="1"/>
</dbReference>
<dbReference type="Gene3D" id="3.90.110.10">
    <property type="entry name" value="Lactate dehydrogenase/glycoside hydrolase, family 4, C-terminal"/>
    <property type="match status" value="1"/>
</dbReference>
<dbReference type="Gene3D" id="3.40.50.720">
    <property type="entry name" value="NAD(P)-binding Rossmann-like Domain"/>
    <property type="match status" value="1"/>
</dbReference>
<dbReference type="HAMAP" id="MF_00487">
    <property type="entry name" value="Malate_dehydrog_3"/>
    <property type="match status" value="1"/>
</dbReference>
<dbReference type="InterPro" id="IPR001557">
    <property type="entry name" value="L-lactate/malate_DH"/>
</dbReference>
<dbReference type="InterPro" id="IPR022383">
    <property type="entry name" value="Lactate/malate_DH_C"/>
</dbReference>
<dbReference type="InterPro" id="IPR001236">
    <property type="entry name" value="Lactate/malate_DH_N"/>
</dbReference>
<dbReference type="InterPro" id="IPR015955">
    <property type="entry name" value="Lactate_DH/Glyco_Ohase_4_C"/>
</dbReference>
<dbReference type="InterPro" id="IPR011275">
    <property type="entry name" value="Malate_DH_type3"/>
</dbReference>
<dbReference type="InterPro" id="IPR036291">
    <property type="entry name" value="NAD(P)-bd_dom_sf"/>
</dbReference>
<dbReference type="NCBIfam" id="TIGR01763">
    <property type="entry name" value="MalateDH_bact"/>
    <property type="match status" value="1"/>
</dbReference>
<dbReference type="NCBIfam" id="NF004863">
    <property type="entry name" value="PRK06223.1"/>
    <property type="match status" value="1"/>
</dbReference>
<dbReference type="PANTHER" id="PTHR43128">
    <property type="entry name" value="L-2-HYDROXYCARBOXYLATE DEHYDROGENASE (NAD(P)(+))"/>
    <property type="match status" value="1"/>
</dbReference>
<dbReference type="PANTHER" id="PTHR43128:SF16">
    <property type="entry name" value="L-LACTATE DEHYDROGENASE"/>
    <property type="match status" value="1"/>
</dbReference>
<dbReference type="Pfam" id="PF02866">
    <property type="entry name" value="Ldh_1_C"/>
    <property type="match status" value="1"/>
</dbReference>
<dbReference type="Pfam" id="PF00056">
    <property type="entry name" value="Ldh_1_N"/>
    <property type="match status" value="1"/>
</dbReference>
<dbReference type="PIRSF" id="PIRSF000102">
    <property type="entry name" value="Lac_mal_DH"/>
    <property type="match status" value="1"/>
</dbReference>
<dbReference type="PRINTS" id="PR00086">
    <property type="entry name" value="LLDHDRGNASE"/>
</dbReference>
<dbReference type="SUPFAM" id="SSF56327">
    <property type="entry name" value="LDH C-terminal domain-like"/>
    <property type="match status" value="1"/>
</dbReference>
<dbReference type="SUPFAM" id="SSF51735">
    <property type="entry name" value="NAD(P)-binding Rossmann-fold domains"/>
    <property type="match status" value="1"/>
</dbReference>
<reference key="1">
    <citation type="journal article" date="2009" name="PLoS ONE">
        <title>Complete genome sequence of the aerobic CO-oxidizing thermophile Thermomicrobium roseum.</title>
        <authorList>
            <person name="Wu D."/>
            <person name="Raymond J."/>
            <person name="Wu M."/>
            <person name="Chatterji S."/>
            <person name="Ren Q."/>
            <person name="Graham J.E."/>
            <person name="Bryant D.A."/>
            <person name="Robb F."/>
            <person name="Colman A."/>
            <person name="Tallon L.J."/>
            <person name="Badger J.H."/>
            <person name="Madupu R."/>
            <person name="Ward N.L."/>
            <person name="Eisen J.A."/>
        </authorList>
    </citation>
    <scope>NUCLEOTIDE SEQUENCE [LARGE SCALE GENOMIC DNA]</scope>
    <source>
        <strain>ATCC 27502 / DSM 5159 / P-2</strain>
    </source>
</reference>
<accession>B9KZS7</accession>
<proteinExistence type="inferred from homology"/>
<name>MDH_THERP</name>
<sequence>MRRKVSIIGAGAVGATTAQYLAARNIADLVLVDIVENLPQGKALDLLEAGPVLGYDCQIVGSNSYDATAGSDVIVITSGSPRKPGMSRDDLLRVNMNIVRSVTEQAAPLSPDAVIIVVTNPLDAMCHVALEASGFPPARVVGQAGVLDAARFRAFVALELGVSPRDVHAMVLGGHGDTMVPLPRYTTVSGIPITQLIPADRIQAIVERTRDGGGEIVRLLGTSAFYAPAASVAEMVEAVLLDANRVLAASTYLTGQYGIHDLYVGVPIRLGAGGVKEIIEVELTDEERAALHRSANAVRELVQAMKQLT</sequence>
<gene>
    <name evidence="1" type="primary">mdh</name>
    <name type="ordered locus">trd_0921</name>
</gene>
<evidence type="ECO:0000255" key="1">
    <source>
        <dbReference type="HAMAP-Rule" id="MF_00487"/>
    </source>
</evidence>
<comment type="function">
    <text evidence="1">Catalyzes the reversible oxidation of malate to oxaloacetate.</text>
</comment>
<comment type="catalytic activity">
    <reaction evidence="1">
        <text>(S)-malate + NAD(+) = oxaloacetate + NADH + H(+)</text>
        <dbReference type="Rhea" id="RHEA:21432"/>
        <dbReference type="ChEBI" id="CHEBI:15378"/>
        <dbReference type="ChEBI" id="CHEBI:15589"/>
        <dbReference type="ChEBI" id="CHEBI:16452"/>
        <dbReference type="ChEBI" id="CHEBI:57540"/>
        <dbReference type="ChEBI" id="CHEBI:57945"/>
        <dbReference type="EC" id="1.1.1.37"/>
    </reaction>
</comment>
<comment type="similarity">
    <text evidence="1">Belongs to the LDH/MDH superfamily. MDH type 3 family.</text>
</comment>
<protein>
    <recommendedName>
        <fullName evidence="1">Malate dehydrogenase</fullName>
        <ecNumber evidence="1">1.1.1.37</ecNumber>
    </recommendedName>
</protein>